<name>TRPF_SINMW</name>
<accession>A6UEI0</accession>
<dbReference type="EC" id="5.3.1.24" evidence="1"/>
<dbReference type="EMBL" id="CP000738">
    <property type="protein sequence ID" value="ABR62060.1"/>
    <property type="molecule type" value="Genomic_DNA"/>
</dbReference>
<dbReference type="RefSeq" id="WP_012067441.1">
    <property type="nucleotide sequence ID" value="NC_009636.1"/>
</dbReference>
<dbReference type="RefSeq" id="YP_001328895.1">
    <property type="nucleotide sequence ID" value="NC_009636.1"/>
</dbReference>
<dbReference type="SMR" id="A6UEI0"/>
<dbReference type="STRING" id="366394.Smed_3236"/>
<dbReference type="GeneID" id="61610818"/>
<dbReference type="KEGG" id="smd:Smed_3236"/>
<dbReference type="PATRIC" id="fig|366394.8.peg.6474"/>
<dbReference type="eggNOG" id="COG0135">
    <property type="taxonomic scope" value="Bacteria"/>
</dbReference>
<dbReference type="HOGENOM" id="CLU_076364_1_1_5"/>
<dbReference type="OrthoDB" id="9796196at2"/>
<dbReference type="UniPathway" id="UPA00035">
    <property type="reaction ID" value="UER00042"/>
</dbReference>
<dbReference type="Proteomes" id="UP000001108">
    <property type="component" value="Chromosome"/>
</dbReference>
<dbReference type="GO" id="GO:0004640">
    <property type="term" value="F:phosphoribosylanthranilate isomerase activity"/>
    <property type="evidence" value="ECO:0007669"/>
    <property type="project" value="UniProtKB-UniRule"/>
</dbReference>
<dbReference type="GO" id="GO:0000162">
    <property type="term" value="P:L-tryptophan biosynthetic process"/>
    <property type="evidence" value="ECO:0007669"/>
    <property type="project" value="UniProtKB-UniRule"/>
</dbReference>
<dbReference type="CDD" id="cd00405">
    <property type="entry name" value="PRAI"/>
    <property type="match status" value="1"/>
</dbReference>
<dbReference type="Gene3D" id="3.20.20.70">
    <property type="entry name" value="Aldolase class I"/>
    <property type="match status" value="1"/>
</dbReference>
<dbReference type="HAMAP" id="MF_00135">
    <property type="entry name" value="PRAI"/>
    <property type="match status" value="1"/>
</dbReference>
<dbReference type="InterPro" id="IPR013785">
    <property type="entry name" value="Aldolase_TIM"/>
</dbReference>
<dbReference type="InterPro" id="IPR001240">
    <property type="entry name" value="PRAI_dom"/>
</dbReference>
<dbReference type="InterPro" id="IPR011060">
    <property type="entry name" value="RibuloseP-bd_barrel"/>
</dbReference>
<dbReference type="InterPro" id="IPR044643">
    <property type="entry name" value="TrpF_fam"/>
</dbReference>
<dbReference type="NCBIfam" id="NF002295">
    <property type="entry name" value="PRK01222.1-1"/>
    <property type="match status" value="1"/>
</dbReference>
<dbReference type="PANTHER" id="PTHR42894">
    <property type="entry name" value="N-(5'-PHOSPHORIBOSYL)ANTHRANILATE ISOMERASE"/>
    <property type="match status" value="1"/>
</dbReference>
<dbReference type="PANTHER" id="PTHR42894:SF1">
    <property type="entry name" value="N-(5'-PHOSPHORIBOSYL)ANTHRANILATE ISOMERASE"/>
    <property type="match status" value="1"/>
</dbReference>
<dbReference type="Pfam" id="PF00697">
    <property type="entry name" value="PRAI"/>
    <property type="match status" value="1"/>
</dbReference>
<dbReference type="SUPFAM" id="SSF51366">
    <property type="entry name" value="Ribulose-phoshate binding barrel"/>
    <property type="match status" value="1"/>
</dbReference>
<sequence length="215" mass="22843">MKTEVKICGLKTAEALQRAVALGASHTGFIFFPKSPRNIEPDDAGRLAELARGRAKIVAVTVDADNDDLDEIVSALHPEVLQLHGSENPERVLAIKALYGLPVIKALPIREASDLERIAPYIGIADRFLLDAKPPAGSDLPGGNGVSFDWRLLDALDANVDYMLSGGLNASNVEDALALTGARAIDTSSGVESAPGIKDLTLMDAFFEAIRRAEA</sequence>
<feature type="chain" id="PRO_1000018640" description="N-(5'-phosphoribosyl)anthranilate isomerase">
    <location>
        <begin position="1"/>
        <end position="215"/>
    </location>
</feature>
<comment type="catalytic activity">
    <reaction evidence="1">
        <text>N-(5-phospho-beta-D-ribosyl)anthranilate = 1-(2-carboxyphenylamino)-1-deoxy-D-ribulose 5-phosphate</text>
        <dbReference type="Rhea" id="RHEA:21540"/>
        <dbReference type="ChEBI" id="CHEBI:18277"/>
        <dbReference type="ChEBI" id="CHEBI:58613"/>
        <dbReference type="EC" id="5.3.1.24"/>
    </reaction>
</comment>
<comment type="pathway">
    <text evidence="1">Amino-acid biosynthesis; L-tryptophan biosynthesis; L-tryptophan from chorismate: step 3/5.</text>
</comment>
<comment type="similarity">
    <text evidence="1">Belongs to the TrpF family.</text>
</comment>
<evidence type="ECO:0000255" key="1">
    <source>
        <dbReference type="HAMAP-Rule" id="MF_00135"/>
    </source>
</evidence>
<organism>
    <name type="scientific">Sinorhizobium medicae (strain WSM419)</name>
    <name type="common">Ensifer medicae</name>
    <dbReference type="NCBI Taxonomy" id="366394"/>
    <lineage>
        <taxon>Bacteria</taxon>
        <taxon>Pseudomonadati</taxon>
        <taxon>Pseudomonadota</taxon>
        <taxon>Alphaproteobacteria</taxon>
        <taxon>Hyphomicrobiales</taxon>
        <taxon>Rhizobiaceae</taxon>
        <taxon>Sinorhizobium/Ensifer group</taxon>
        <taxon>Sinorhizobium</taxon>
    </lineage>
</organism>
<proteinExistence type="inferred from homology"/>
<protein>
    <recommendedName>
        <fullName evidence="1">N-(5'-phosphoribosyl)anthranilate isomerase</fullName>
        <shortName evidence="1">PRAI</shortName>
        <ecNumber evidence="1">5.3.1.24</ecNumber>
    </recommendedName>
</protein>
<keyword id="KW-0028">Amino-acid biosynthesis</keyword>
<keyword id="KW-0057">Aromatic amino acid biosynthesis</keyword>
<keyword id="KW-0413">Isomerase</keyword>
<keyword id="KW-0822">Tryptophan biosynthesis</keyword>
<gene>
    <name evidence="1" type="primary">trpF</name>
    <name type="ordered locus">Smed_3236</name>
</gene>
<reference key="1">
    <citation type="submission" date="2007-06" db="EMBL/GenBank/DDBJ databases">
        <title>Complete sequence of Sinorhizobium medicae WSM419 chromosome.</title>
        <authorList>
            <consortium name="US DOE Joint Genome Institute"/>
            <person name="Copeland A."/>
            <person name="Lucas S."/>
            <person name="Lapidus A."/>
            <person name="Barry K."/>
            <person name="Glavina del Rio T."/>
            <person name="Dalin E."/>
            <person name="Tice H."/>
            <person name="Pitluck S."/>
            <person name="Chain P."/>
            <person name="Malfatti S."/>
            <person name="Shin M."/>
            <person name="Vergez L."/>
            <person name="Schmutz J."/>
            <person name="Larimer F."/>
            <person name="Land M."/>
            <person name="Hauser L."/>
            <person name="Kyrpides N."/>
            <person name="Mikhailova N."/>
            <person name="Reeve W.G."/>
            <person name="Richardson P."/>
        </authorList>
    </citation>
    <scope>NUCLEOTIDE SEQUENCE [LARGE SCALE GENOMIC DNA]</scope>
    <source>
        <strain>WSM419</strain>
    </source>
</reference>